<accession>Q01986</accession>
<accession>Q5EBD5</accession>
<proteinExistence type="evidence at protein level"/>
<gene>
    <name evidence="17" type="primary">Map2k1</name>
    <name type="synonym">Mek1</name>
    <name type="synonym">Prkmk1</name>
</gene>
<evidence type="ECO:0000250" key="1"/>
<evidence type="ECO:0000250" key="2">
    <source>
        <dbReference type="UniProtKB" id="P29678"/>
    </source>
</evidence>
<evidence type="ECO:0000250" key="3">
    <source>
        <dbReference type="UniProtKB" id="P31938"/>
    </source>
</evidence>
<evidence type="ECO:0000250" key="4">
    <source>
        <dbReference type="UniProtKB" id="Q02750"/>
    </source>
</evidence>
<evidence type="ECO:0000255" key="5">
    <source>
        <dbReference type="PROSITE-ProRule" id="PRU00159"/>
    </source>
</evidence>
<evidence type="ECO:0000255" key="6">
    <source>
        <dbReference type="PROSITE-ProRule" id="PRU10027"/>
    </source>
</evidence>
<evidence type="ECO:0000256" key="7">
    <source>
        <dbReference type="SAM" id="MobiDB-lite"/>
    </source>
</evidence>
<evidence type="ECO:0000269" key="8">
    <source>
    </source>
</evidence>
<evidence type="ECO:0000269" key="9">
    <source>
    </source>
</evidence>
<evidence type="ECO:0000269" key="10">
    <source>
    </source>
</evidence>
<evidence type="ECO:0000269" key="11">
    <source>
    </source>
</evidence>
<evidence type="ECO:0000269" key="12">
    <source>
    </source>
</evidence>
<evidence type="ECO:0000269" key="13">
    <source>
    </source>
</evidence>
<evidence type="ECO:0000269" key="14">
    <source>
    </source>
</evidence>
<evidence type="ECO:0000269" key="15">
    <source>
    </source>
</evidence>
<evidence type="ECO:0000305" key="16"/>
<evidence type="ECO:0000312" key="17">
    <source>
        <dbReference type="RGD" id="70495"/>
    </source>
</evidence>
<feature type="chain" id="PRO_0000086369" description="Dual specificity mitogen-activated protein kinase kinase 1">
    <location>
        <begin position="1"/>
        <end position="393"/>
    </location>
</feature>
<feature type="domain" description="Protein kinase" evidence="5">
    <location>
        <begin position="68"/>
        <end position="361"/>
    </location>
</feature>
<feature type="region of interest" description="Disordered" evidence="7">
    <location>
        <begin position="1"/>
        <end position="27"/>
    </location>
</feature>
<feature type="region of interest" description="RAF1-binding">
    <location>
        <begin position="270"/>
        <end position="307"/>
    </location>
</feature>
<feature type="active site" description="Proton acceptor" evidence="5 6">
    <location>
        <position position="190"/>
    </location>
</feature>
<feature type="binding site" evidence="5">
    <location>
        <begin position="74"/>
        <end position="82"/>
    </location>
    <ligand>
        <name>ATP</name>
        <dbReference type="ChEBI" id="CHEBI:30616"/>
    </ligand>
</feature>
<feature type="binding site" evidence="5">
    <location>
        <position position="97"/>
    </location>
    <ligand>
        <name>ATP</name>
        <dbReference type="ChEBI" id="CHEBI:30616"/>
    </ligand>
</feature>
<feature type="site" description="Cleavage; by anthrax lethal factor" evidence="1">
    <location>
        <begin position="8"/>
        <end position="9"/>
    </location>
</feature>
<feature type="modified residue" description="Phosphoserine; by RAF" evidence="4">
    <location>
        <position position="218"/>
    </location>
</feature>
<feature type="modified residue" description="Phosphoserine; by RAF" evidence="4">
    <location>
        <position position="222"/>
    </location>
</feature>
<feature type="modified residue" description="Phosphothreonine" evidence="4">
    <location>
        <position position="286"/>
    </location>
</feature>
<feature type="modified residue" description="Phosphothreonine; by MAPK1" evidence="11">
    <location>
        <position position="292"/>
    </location>
</feature>
<feature type="modified residue" description="Phosphoserine; by PAK" evidence="10 11">
    <location>
        <position position="298"/>
    </location>
</feature>
<comment type="function">
    <text evidence="4 8 12">Dual specificity protein kinase which acts as an essential component of the MAP kinase signal transduction pathway. Binding of extracellular ligands such as growth factors, cytokines and hormones to their cell-surface receptors activates RAS and this initiates RAF1 activation. RAF1 then further activates the dual-specificity protein kinases MAP2K1/MEK1 and MAP2K2/MEK2. Both MAP2K1/MEK1 and MAP2K2/MEK2 function specifically in the MAPK/ERK cascade, and catalyze the concomitant phosphorylation of a threonine and a tyrosine residue in a Thr-Glu-Tyr sequence located in the extracellular signal-regulated kinases MAPK3/ERK1 and MAPK1/ERK2, leading to their activation and further transduction of the signal within the MAPK/ERK cascade. Activates BRAF in a KSR1 or KSR2-dependent manner; by binding to KSR1 or KSR2 releases the inhibitory intramolecular interaction between KSR1 or KSR2 protein kinase and N-terminal domains which promotes KSR1 or KSR2-BRAF dimerization and BRAF activation (By similarity). Depending on the cellular context, this pathway mediates diverse biological functions such as cell growth, adhesion, survival and differentiation, predominantly through the regulation of transcription, metabolism and cytoskeletal rearrangements. One target of the MAPK/ERK cascade is peroxisome proliferator-activated receptor gamma (PPARG), a nuclear receptor that promotes differentiation and apoptosis. MAP2K1/MEK1 has been shown to export PPARG from the nucleus. The MAPK/ERK cascade is also involved in the regulation of endosomal dynamics, including lysosome processing and endosome cycling through the perinuclear recycling compartment (PNRC), as well as in the fragmentation of the Golgi apparatus during mitosis.</text>
</comment>
<comment type="catalytic activity">
    <reaction>
        <text>L-seryl-[protein] + ATP = O-phospho-L-seryl-[protein] + ADP + H(+)</text>
        <dbReference type="Rhea" id="RHEA:17989"/>
        <dbReference type="Rhea" id="RHEA-COMP:9863"/>
        <dbReference type="Rhea" id="RHEA-COMP:11604"/>
        <dbReference type="ChEBI" id="CHEBI:15378"/>
        <dbReference type="ChEBI" id="CHEBI:29999"/>
        <dbReference type="ChEBI" id="CHEBI:30616"/>
        <dbReference type="ChEBI" id="CHEBI:83421"/>
        <dbReference type="ChEBI" id="CHEBI:456216"/>
        <dbReference type="EC" id="2.7.12.2"/>
    </reaction>
</comment>
<comment type="catalytic activity">
    <reaction>
        <text>L-threonyl-[protein] + ATP = O-phospho-L-threonyl-[protein] + ADP + H(+)</text>
        <dbReference type="Rhea" id="RHEA:46608"/>
        <dbReference type="Rhea" id="RHEA-COMP:11060"/>
        <dbReference type="Rhea" id="RHEA-COMP:11605"/>
        <dbReference type="ChEBI" id="CHEBI:15378"/>
        <dbReference type="ChEBI" id="CHEBI:30013"/>
        <dbReference type="ChEBI" id="CHEBI:30616"/>
        <dbReference type="ChEBI" id="CHEBI:61977"/>
        <dbReference type="ChEBI" id="CHEBI:456216"/>
        <dbReference type="EC" id="2.7.12.2"/>
    </reaction>
</comment>
<comment type="catalytic activity">
    <reaction>
        <text>L-tyrosyl-[protein] + ATP = O-phospho-L-tyrosyl-[protein] + ADP + H(+)</text>
        <dbReference type="Rhea" id="RHEA:10596"/>
        <dbReference type="Rhea" id="RHEA-COMP:10136"/>
        <dbReference type="Rhea" id="RHEA-COMP:20101"/>
        <dbReference type="ChEBI" id="CHEBI:15378"/>
        <dbReference type="ChEBI" id="CHEBI:30616"/>
        <dbReference type="ChEBI" id="CHEBI:46858"/>
        <dbReference type="ChEBI" id="CHEBI:61978"/>
        <dbReference type="ChEBI" id="CHEBI:456216"/>
        <dbReference type="EC" id="2.7.12.2"/>
    </reaction>
</comment>
<comment type="activity regulation">
    <text evidence="4 10 11 14 15">Ras proteins such as HRAS mediate the activation of RAF proteins such as RAF1 or BRAF which in turn activate extracellular signal-regulated kinases (ERK) through MAPK (mitogen-activated protein kinases) and ERK kinases MAP2K1/MEK1 and MAP2K2/MEK2. Activation occurs through phosphorylation of Ser-218 and Ser-222. MAP2K1/MEK1 binds KSR1 or KSR2 releasing the inhibitory intramolecular interaction between KSR1 or KSR2 protein kinase and N-terminal domains (By similarity). This allows KSR1 or KSR2 dimerization with BRAF leading to BRAF activation and phosphorylation of MAP2K1 (By similarity). MAP2K1/MEK1 is also the target of negative feed-back regulation by its substrate kinases, such as MAPK1/ERK2. These phosphorylate MAP2K1/MEK1 on Thr-292, thereby facilitating dephosphorylation of the activating residues Ser-218 and Ser-222. Inhibited by serine/threonine phosphatase 2A.</text>
</comment>
<comment type="subunit">
    <text evidence="2 3 4 9 11 13 14 15">Found in a complex with at least BRAF, HRAS, MAP2K1, MAPK3/ERK1 and RGS14 (PubMed:19319189). Forms a heterodimer with MAP2K2/MEK2 (By similarity). Forms heterodimers with KSR2 which further dimerize to form tetramers (By similarity). Interacts with KSR1 or KSR2 and BRAF; the interaction with KSR1 or KSR2 mediates KSR1-BRAF or KSR2-BRAF dimerization (By similarity). Interacts with ARBB2, LAMTOR3, MAPK1/ERK2 and RAF1 (PubMed:11226259, PubMed:14993270, PubMed:7565670, PubMed:9733512). Interacts with MAPK1/ERK2 (By similarity). Interacts with MORG1 (By similarity). Interacts with PPARG (By similarity). Interacts with VRK2 (By similarity). Interacts with SGK1 (By similarity). Interacts with BIRC6/bruce (By similarity). Interacts with KAT7; the interaction promotes KAT7 phosphorylation (By similarity). Interacts with RAF1 and NEK10; the interaction is required for ERK1/2-signaling pathway activation in response to UV irradiation (By similarity). Interacts with TRAF3IP3 (By similarity). Interacts with MOS (By similarity).</text>
</comment>
<comment type="subcellular location">
    <subcellularLocation>
        <location evidence="4">Cytoplasm</location>
        <location evidence="4">Cytoskeleton</location>
        <location evidence="4">Microtubule organizing center</location>
        <location evidence="4">Centrosome</location>
    </subcellularLocation>
    <subcellularLocation>
        <location evidence="4">Cytoplasm</location>
        <location evidence="4">Cytoskeleton</location>
        <location evidence="4">Microtubule organizing center</location>
        <location evidence="4">Spindle pole body</location>
    </subcellularLocation>
    <subcellularLocation>
        <location evidence="4">Cytoplasm</location>
    </subcellularLocation>
    <subcellularLocation>
        <location evidence="4">Nucleus</location>
    </subcellularLocation>
    <subcellularLocation>
        <location evidence="4">Membrane</location>
        <topology evidence="4">Peripheral membrane protein</topology>
    </subcellularLocation>
    <text evidence="4">Localizes at centrosomes during prometaphase, midzone during anaphase and midbody during telophase/cytokinesis. Membrane localization is probably regulated by its interaction with KSR1.</text>
</comment>
<comment type="domain">
    <text evidence="14">The proline-rich region localized between residues 270 and 307 is important for binding to RAF1 and activation of MAP2K1/MEK1.</text>
</comment>
<comment type="PTM">
    <text evidence="4 8 10 11">Phosphorylation at Ser-218 and Ser-222 by MAP kinase kinase kinases (BRAF or MEKK1) positively regulates kinase activity (PubMed:10769026). Also phosphorylated at Thr-292 by MAPK1/ERK2 and at Ser-298 by PAK (PubMed:12876277, PubMed:14993270). MAPK1/ERK2 phosphorylation of Thr-292 occurs in response to cellular adhesion and leads to inhibition of Ser-298 phosphorylation by PAK (PubMed:14993270). Autophosphorylated at Ser-218 and Ser-222, autophosphosphorylation is promoted by NEK10 following UV irradiation (By similarity).</text>
</comment>
<comment type="similarity">
    <text evidence="16">Belongs to the protein kinase superfamily. STE Ser/Thr protein kinase family. MAP kinase kinase subfamily.</text>
</comment>
<sequence>MPKKKPTPIQLNPAPDGSAVNGTSSAETNLEALQKKLEELELDEQQRKRLEAFLTQKQKVGELKDDDFEKISELGAGNGGVVFKVSHKPSGLVMARKLIHLEIKPAIRNQIIRELQVLHECNSPYIVGFYGAFYSDGEISICMEHMDGGSLDQVLKKAGRIPEQILGKVSIAVIKGLTYLREKHKIMHRDVKPSNILVNSRGEIKLCDFGVSGQLIDSMANSFVGTRSYMSPERLQGTHYSVQSDIWSMGLSLVEMAVGRYPIPPPDAKELELLFGCQVEGDAAETPPRPRTPGRPLSSYGMDSRPPMAIFELLDYIVNEPPPKLPSGVFSLEFQDFVNKCLIKNPAERADLKQLMVHAFIKRSDAEEVDFAGWLCSTIGLNQPSTPTHAASI</sequence>
<organism>
    <name type="scientific">Rattus norvegicus</name>
    <name type="common">Rat</name>
    <dbReference type="NCBI Taxonomy" id="10116"/>
    <lineage>
        <taxon>Eukaryota</taxon>
        <taxon>Metazoa</taxon>
        <taxon>Chordata</taxon>
        <taxon>Craniata</taxon>
        <taxon>Vertebrata</taxon>
        <taxon>Euteleostomi</taxon>
        <taxon>Mammalia</taxon>
        <taxon>Eutheria</taxon>
        <taxon>Euarchontoglires</taxon>
        <taxon>Glires</taxon>
        <taxon>Rodentia</taxon>
        <taxon>Myomorpha</taxon>
        <taxon>Muroidea</taxon>
        <taxon>Muridae</taxon>
        <taxon>Murinae</taxon>
        <taxon>Rattus</taxon>
    </lineage>
</organism>
<keyword id="KW-0067">ATP-binding</keyword>
<keyword id="KW-0963">Cytoplasm</keyword>
<keyword id="KW-0206">Cytoskeleton</keyword>
<keyword id="KW-0903">Direct protein sequencing</keyword>
<keyword id="KW-0418">Kinase</keyword>
<keyword id="KW-0472">Membrane</keyword>
<keyword id="KW-0547">Nucleotide-binding</keyword>
<keyword id="KW-0539">Nucleus</keyword>
<keyword id="KW-0597">Phosphoprotein</keyword>
<keyword id="KW-1185">Reference proteome</keyword>
<keyword id="KW-0723">Serine/threonine-protein kinase</keyword>
<keyword id="KW-0808">Transferase</keyword>
<keyword id="KW-0829">Tyrosine-protein kinase</keyword>
<name>MP2K1_RAT</name>
<reference key="1">
    <citation type="journal article" date="1993" name="Proc. Natl. Acad. Sci. U.S.A.">
        <title>Molecular structure of a protein-tyrosine/threonine kinase activating p42 mitogen-activated protein (MAP) kinase: MAP kinase kinase.</title>
        <authorList>
            <person name="Wu J."/>
            <person name="Harrison J.K."/>
            <person name="Vincent L.A."/>
            <person name="Haystead C."/>
            <person name="Haystead T.A.J."/>
            <person name="Michel H."/>
            <person name="Hunt D.F."/>
            <person name="Lynch K.R."/>
            <person name="Sturgill T.W."/>
        </authorList>
    </citation>
    <scope>NUCLEOTIDE SEQUENCE [MRNA]</scope>
    <source>
        <strain>Sprague-Dawley</strain>
        <tissue>Kidney</tissue>
    </source>
</reference>
<reference key="2">
    <citation type="journal article" date="1993" name="FEBS Lett.">
        <title>Isolation of two members of the rat MAP kinase kinase gene family.</title>
        <authorList>
            <person name="Otsu M."/>
            <person name="Terada Y."/>
            <person name="Okayama H."/>
        </authorList>
    </citation>
    <scope>NUCLEOTIDE SEQUENCE [MRNA]</scope>
</reference>
<reference key="3">
    <citation type="journal article" date="1993" name="Gene">
        <title>Cloning and sequencing of a cDNA encoding rat brain mitogen-activated protein (MAP) kinase activator.</title>
        <authorList>
            <person name="Doering F."/>
            <person name="Drewes G."/>
            <person name="Berling B."/>
            <person name="Mandelkow E.M."/>
        </authorList>
    </citation>
    <scope>NUCLEOTIDE SEQUENCE [MRNA]</scope>
    <scope>PARTIAL PROTEIN SEQUENCE</scope>
    <source>
        <strain>Sprague-Dawley</strain>
    </source>
</reference>
<reference key="4">
    <citation type="journal article" date="2004" name="Genome Res.">
        <title>The status, quality, and expansion of the NIH full-length cDNA project: the Mammalian Gene Collection (MGC).</title>
        <authorList>
            <consortium name="The MGC Project Team"/>
        </authorList>
    </citation>
    <scope>NUCLEOTIDE SEQUENCE [LARGE SCALE MRNA]</scope>
    <source>
        <tissue>Thymus</tissue>
    </source>
</reference>
<reference key="5">
    <citation type="submission" date="2007-04" db="UniProtKB">
        <authorList>
            <person name="Lubec G."/>
            <person name="Chen W.-Q."/>
        </authorList>
    </citation>
    <scope>PROTEIN SEQUENCE OF 206-227; 270-291 AND 325-340</scope>
    <scope>IDENTIFICATION BY MASS SPECTROMETRY</scope>
    <source>
        <strain>Sprague-Dawley</strain>
        <tissue>Hippocampus</tissue>
    </source>
</reference>
<reference key="6">
    <citation type="journal article" date="1995" name="Mol. Cell. Biol.">
        <title>A proline-rich sequence unique to MEK1 and MEK2 is required for raf binding and regulates MEK function.</title>
        <authorList>
            <person name="Catling A.D."/>
            <person name="Schaeffer H.J."/>
            <person name="Reuter C.W."/>
            <person name="Reddy G.R."/>
            <person name="Weber M.J."/>
        </authorList>
    </citation>
    <scope>DOMAIN</scope>
    <scope>INTERACTION WITH RAF1</scope>
    <scope>ACTIVITY REGULATION</scope>
</reference>
<reference key="7">
    <citation type="journal article" date="1998" name="Science">
        <title>MP1: a MEK binding partner that enhances enzymatic activation of the MAP kinase cascade.</title>
        <authorList>
            <person name="Schaeffer H.J."/>
            <person name="Catling A.D."/>
            <person name="Eblen S.T."/>
            <person name="Collier L.S."/>
            <person name="Krauss A."/>
            <person name="Weber M.J."/>
        </authorList>
    </citation>
    <scope>INTERACTION WITH LAMTOR3</scope>
    <scope>ACTIVITY REGULATION</scope>
</reference>
<reference key="8">
    <citation type="journal article" date="2000" name="J. Cell Biol.">
        <title>A specific activation of the mitogen-activated protein kinase kinase 1 (MEK1) is required for Golgi fragmentation during mitosis.</title>
        <authorList>
            <person name="Colanzi A."/>
            <person name="Deerinck T.J."/>
            <person name="Ellisman M.H."/>
            <person name="Malhotra V."/>
        </authorList>
    </citation>
    <scope>PHOSPHORYLATION</scope>
    <scope>FUNCTION</scope>
</reference>
<reference key="9">
    <citation type="journal article" date="2001" name="Proc. Natl. Acad. Sci. U.S.A.">
        <title>Activation and targeting of extracellular signal-regulated kinases by beta-arrestin scaffolds.</title>
        <authorList>
            <person name="Luttrell L.M."/>
            <person name="Roudabush F.L."/>
            <person name="Choy E.W."/>
            <person name="Miller W.E."/>
            <person name="Field M.E."/>
            <person name="Pierce K.L."/>
            <person name="Lefkowitz R.J."/>
        </authorList>
    </citation>
    <scope>INTERACTION WITH ARRB2</scope>
</reference>
<reference key="10">
    <citation type="journal article" date="2003" name="J. Cell Biol.">
        <title>PAK1 phosphorylation of MEK1 regulates fibronectin-stimulated MAPK activation.</title>
        <authorList>
            <person name="Slack-Davis J.K."/>
            <person name="Eblen S.T."/>
            <person name="Zecevic M."/>
            <person name="Boerner S.A."/>
            <person name="Tarcsafalvi A."/>
            <person name="Diaz H.B."/>
            <person name="Marshall M.S."/>
            <person name="Weber M.J."/>
            <person name="Parsons J.T."/>
            <person name="Catling A.D."/>
        </authorList>
    </citation>
    <scope>PHOSPHORYLATION AT SER-298</scope>
    <scope>ACTIVITY REGULATION</scope>
</reference>
<reference key="11">
    <citation type="journal article" date="2004" name="Mol. Cell. Biol.">
        <title>Mitogen-activated protein kinase feedback phosphorylation regulates MEK1 complex formation and activation during cellular adhesion.</title>
        <authorList>
            <person name="Eblen S.T."/>
            <person name="Slack-Davis J.K."/>
            <person name="Tarcsafalvi A."/>
            <person name="Parsons J.T."/>
            <person name="Weber M.J."/>
            <person name="Catling A.D."/>
        </authorList>
    </citation>
    <scope>PHOSPHORYLATION AT THR-292 AND SER-298</scope>
    <scope>INTERACTION WITH MAPK1/ERK2</scope>
    <scope>ACTIVITY REGULATION</scope>
</reference>
<reference key="12">
    <citation type="journal article" date="2009" name="EMBO J.">
        <title>The novel lipid raft adaptor p18 controls endosome dynamics by anchoring the MEK-ERK pathway to late endosomes.</title>
        <authorList>
            <person name="Nada S."/>
            <person name="Hondo A."/>
            <person name="Kasai A."/>
            <person name="Koike M."/>
            <person name="Saito K."/>
            <person name="Uchiyama Y."/>
            <person name="Okada M."/>
        </authorList>
    </citation>
    <scope>FUNCTION OF THE MAPK/ERK PATHWAY</scope>
</reference>
<reference key="13">
    <citation type="journal article" date="2009" name="PLoS ONE">
        <title>Regulator of G-protein signaling 14 (RGS14) is a selective H-Ras effector.</title>
        <authorList>
            <person name="Willard F.S."/>
            <person name="Willard M.D."/>
            <person name="Kimple A.J."/>
            <person name="Soundararajan M."/>
            <person name="Oestreich E.A."/>
            <person name="Li X."/>
            <person name="Sowa N.A."/>
            <person name="Kimple R.J."/>
            <person name="Doyle D.A."/>
            <person name="Der C.J."/>
            <person name="Zylka M.J."/>
            <person name="Snider W.D."/>
            <person name="Siderovski D.P."/>
        </authorList>
    </citation>
    <scope>IDENTIFICATION IN A COMPLEX WITH BRAF; HRAS; MAPK3 AND RGS14</scope>
</reference>
<reference key="14">
    <citation type="journal article" date="1998" name="Oncogene">
        <title>Signaling by dual specificity kinases.</title>
        <authorList>
            <person name="Dhanasekaran N."/>
            <person name="Premkumar Reddy E."/>
        </authorList>
    </citation>
    <scope>REVIEW ON FUNCTION</scope>
</reference>
<reference key="15">
    <citation type="journal article" date="2004" name="Nat. Rev. Mol. Cell Biol.">
        <title>The RAF proteins take centre stage.</title>
        <authorList>
            <person name="Wellbrock C."/>
            <person name="Karasarides M."/>
            <person name="Marais R."/>
        </authorList>
    </citation>
    <scope>REVIEW ON ACTIVITY REGULATION</scope>
</reference>
<reference key="16">
    <citation type="journal article" date="2009" name="BioFactors">
        <title>The ERK signaling cascade--views from different subcellular compartments.</title>
        <authorList>
            <person name="Yao Z."/>
            <person name="Seger R."/>
        </authorList>
    </citation>
    <scope>REVIEW ON FUNCTION</scope>
</reference>
<reference key="17">
    <citation type="journal article" date="2011" name="Genes Cancer">
        <title>The ERK cascade: distinct functions within various subcellular organelles.</title>
        <authorList>
            <person name="Wortzel I."/>
            <person name="Seger R."/>
        </authorList>
    </citation>
    <scope>REVIEW ON FUNCTION</scope>
</reference>
<reference key="18">
    <citation type="journal article" date="2012" name="Nat. Commun.">
        <title>Quantitative maps of protein phosphorylation sites across 14 different rat organs and tissues.</title>
        <authorList>
            <person name="Lundby A."/>
            <person name="Secher A."/>
            <person name="Lage K."/>
            <person name="Nordsborg N.B."/>
            <person name="Dmytriyev A."/>
            <person name="Lundby C."/>
            <person name="Olsen J.V."/>
        </authorList>
    </citation>
    <scope>IDENTIFICATION BY MASS SPECTROMETRY [LARGE SCALE ANALYSIS]</scope>
</reference>
<protein>
    <recommendedName>
        <fullName evidence="16">Dual specificity mitogen-activated protein kinase kinase 1</fullName>
        <shortName>MAP kinase kinase 1</shortName>
        <shortName>MAPKK 1</shortName>
        <ecNumber>2.7.12.2</ecNumber>
    </recommendedName>
    <alternativeName>
        <fullName>ERK activator kinase 1</fullName>
    </alternativeName>
    <alternativeName>
        <fullName>MAPK/ERK kinase 1</fullName>
        <shortName>MEK 1</shortName>
    </alternativeName>
</protein>
<dbReference type="EC" id="2.7.12.2"/>
<dbReference type="EMBL" id="Z16415">
    <property type="protein sequence ID" value="CAA78905.1"/>
    <property type="molecule type" value="mRNA"/>
</dbReference>
<dbReference type="EMBL" id="D13341">
    <property type="protein sequence ID" value="BAA02603.1"/>
    <property type="molecule type" value="mRNA"/>
</dbReference>
<dbReference type="EMBL" id="D14591">
    <property type="protein sequence ID" value="BAA03441.1"/>
    <property type="molecule type" value="mRNA"/>
</dbReference>
<dbReference type="EMBL" id="X62313">
    <property type="protein sequence ID" value="CAA44192.1"/>
    <property type="molecule type" value="mRNA"/>
</dbReference>
<dbReference type="EMBL" id="BC089772">
    <property type="protein sequence ID" value="AAH89772.1"/>
    <property type="molecule type" value="mRNA"/>
</dbReference>
<dbReference type="PIR" id="JN0840">
    <property type="entry name" value="JN0840"/>
</dbReference>
<dbReference type="RefSeq" id="NP_113831.1">
    <property type="nucleotide sequence ID" value="NM_031643.4"/>
</dbReference>
<dbReference type="SMR" id="Q01986"/>
<dbReference type="BioGRID" id="251005">
    <property type="interactions" value="10"/>
</dbReference>
<dbReference type="CORUM" id="Q01986"/>
<dbReference type="FunCoup" id="Q01986">
    <property type="interactions" value="4391"/>
</dbReference>
<dbReference type="IntAct" id="Q01986">
    <property type="interactions" value="2"/>
</dbReference>
<dbReference type="MINT" id="Q01986"/>
<dbReference type="STRING" id="10116.ENSRNOP00000013933"/>
<dbReference type="BindingDB" id="Q01986"/>
<dbReference type="ChEMBL" id="CHEMBL3430876"/>
<dbReference type="GlyGen" id="Q01986">
    <property type="glycosylation" value="1 site, 1 O-linked glycan (1 site)"/>
</dbReference>
<dbReference type="iPTMnet" id="Q01986"/>
<dbReference type="PhosphoSitePlus" id="Q01986"/>
<dbReference type="jPOST" id="Q01986"/>
<dbReference type="PaxDb" id="10116-ENSRNOP00000013933"/>
<dbReference type="GeneID" id="170851"/>
<dbReference type="KEGG" id="rno:170851"/>
<dbReference type="UCSC" id="RGD:70495">
    <property type="organism name" value="rat"/>
</dbReference>
<dbReference type="AGR" id="RGD:70495"/>
<dbReference type="CTD" id="5604"/>
<dbReference type="RGD" id="70495">
    <property type="gene designation" value="Map2k1"/>
</dbReference>
<dbReference type="eggNOG" id="KOG0581">
    <property type="taxonomic scope" value="Eukaryota"/>
</dbReference>
<dbReference type="HOGENOM" id="CLU_000288_63_23_1"/>
<dbReference type="InParanoid" id="Q01986"/>
<dbReference type="OrthoDB" id="10252354at2759"/>
<dbReference type="PhylomeDB" id="Q01986"/>
<dbReference type="TreeFam" id="TF105137"/>
<dbReference type="BRENDA" id="2.7.12.2">
    <property type="organism ID" value="5301"/>
</dbReference>
<dbReference type="Reactome" id="R-RNO-110056">
    <property type="pathway name" value="MAPK3 (ERK1) activation"/>
</dbReference>
<dbReference type="Reactome" id="R-RNO-170968">
    <property type="pathway name" value="Frs2-mediated activation"/>
</dbReference>
<dbReference type="Reactome" id="R-RNO-445144">
    <property type="pathway name" value="Signal transduction by L1"/>
</dbReference>
<dbReference type="Reactome" id="R-RNO-5673000">
    <property type="pathway name" value="RAF activation"/>
</dbReference>
<dbReference type="Reactome" id="R-RNO-5674135">
    <property type="pathway name" value="MAP2K and MAPK activation"/>
</dbReference>
<dbReference type="Reactome" id="R-RNO-5674499">
    <property type="pathway name" value="Negative feedback regulation of MAPK pathway"/>
</dbReference>
<dbReference type="PRO" id="PR:Q01986"/>
<dbReference type="Proteomes" id="UP000002494">
    <property type="component" value="Unplaced"/>
</dbReference>
<dbReference type="GO" id="GO:0030424">
    <property type="term" value="C:axon"/>
    <property type="evidence" value="ECO:0000314"/>
    <property type="project" value="RGD"/>
</dbReference>
<dbReference type="GO" id="GO:0005938">
    <property type="term" value="C:cell cortex"/>
    <property type="evidence" value="ECO:0000314"/>
    <property type="project" value="RGD"/>
</dbReference>
<dbReference type="GO" id="GO:0005813">
    <property type="term" value="C:centrosome"/>
    <property type="evidence" value="ECO:0007669"/>
    <property type="project" value="UniProtKB-SubCell"/>
</dbReference>
<dbReference type="GO" id="GO:0036064">
    <property type="term" value="C:ciliary basal body"/>
    <property type="evidence" value="ECO:0007669"/>
    <property type="project" value="Ensembl"/>
</dbReference>
<dbReference type="GO" id="GO:0005829">
    <property type="term" value="C:cytosol"/>
    <property type="evidence" value="ECO:0000304"/>
    <property type="project" value="UniProtKB"/>
</dbReference>
<dbReference type="GO" id="GO:0030425">
    <property type="term" value="C:dendrite"/>
    <property type="evidence" value="ECO:0000314"/>
    <property type="project" value="RGD"/>
</dbReference>
<dbReference type="GO" id="GO:0032839">
    <property type="term" value="C:dendrite cytoplasm"/>
    <property type="evidence" value="ECO:0000314"/>
    <property type="project" value="RGD"/>
</dbReference>
<dbReference type="GO" id="GO:0005769">
    <property type="term" value="C:early endosome"/>
    <property type="evidence" value="ECO:0000304"/>
    <property type="project" value="UniProtKB"/>
</dbReference>
<dbReference type="GO" id="GO:0005783">
    <property type="term" value="C:endoplasmic reticulum"/>
    <property type="evidence" value="ECO:0000266"/>
    <property type="project" value="RGD"/>
</dbReference>
<dbReference type="GO" id="GO:0005925">
    <property type="term" value="C:focal adhesion"/>
    <property type="evidence" value="ECO:0000304"/>
    <property type="project" value="UniProtKB"/>
</dbReference>
<dbReference type="GO" id="GO:0098978">
    <property type="term" value="C:glutamatergic synapse"/>
    <property type="evidence" value="ECO:0000314"/>
    <property type="project" value="SynGO"/>
</dbReference>
<dbReference type="GO" id="GO:0005794">
    <property type="term" value="C:Golgi apparatus"/>
    <property type="evidence" value="ECO:0000304"/>
    <property type="project" value="UniProtKB"/>
</dbReference>
<dbReference type="GO" id="GO:0005770">
    <property type="term" value="C:late endosome"/>
    <property type="evidence" value="ECO:0000304"/>
    <property type="project" value="UniProtKB"/>
</dbReference>
<dbReference type="GO" id="GO:0005874">
    <property type="term" value="C:microtubule"/>
    <property type="evidence" value="ECO:0000314"/>
    <property type="project" value="RGD"/>
</dbReference>
<dbReference type="GO" id="GO:0005739">
    <property type="term" value="C:mitochondrion"/>
    <property type="evidence" value="ECO:0000304"/>
    <property type="project" value="UniProtKB"/>
</dbReference>
<dbReference type="GO" id="GO:0005634">
    <property type="term" value="C:nucleus"/>
    <property type="evidence" value="ECO:0000304"/>
    <property type="project" value="UniProtKB"/>
</dbReference>
<dbReference type="GO" id="GO:0043204">
    <property type="term" value="C:perikaryon"/>
    <property type="evidence" value="ECO:0000314"/>
    <property type="project" value="RGD"/>
</dbReference>
<dbReference type="GO" id="GO:0048471">
    <property type="term" value="C:perinuclear region of cytoplasm"/>
    <property type="evidence" value="ECO:0000314"/>
    <property type="project" value="RGD"/>
</dbReference>
<dbReference type="GO" id="GO:0005886">
    <property type="term" value="C:plasma membrane"/>
    <property type="evidence" value="ECO:0007669"/>
    <property type="project" value="Ensembl"/>
</dbReference>
<dbReference type="GO" id="GO:0014069">
    <property type="term" value="C:postsynaptic density"/>
    <property type="evidence" value="ECO:0000314"/>
    <property type="project" value="SynGO"/>
</dbReference>
<dbReference type="GO" id="GO:0005524">
    <property type="term" value="F:ATP binding"/>
    <property type="evidence" value="ECO:0000314"/>
    <property type="project" value="RGD"/>
</dbReference>
<dbReference type="GO" id="GO:0004708">
    <property type="term" value="F:MAP kinase kinase activity"/>
    <property type="evidence" value="ECO:0000314"/>
    <property type="project" value="RGD"/>
</dbReference>
<dbReference type="GO" id="GO:0005078">
    <property type="term" value="F:MAP-kinase scaffold activity"/>
    <property type="evidence" value="ECO:0000266"/>
    <property type="project" value="RGD"/>
</dbReference>
<dbReference type="GO" id="GO:0031435">
    <property type="term" value="F:mitogen-activated protein kinase kinase kinase binding"/>
    <property type="evidence" value="ECO:0000314"/>
    <property type="project" value="RGD"/>
</dbReference>
<dbReference type="GO" id="GO:0030295">
    <property type="term" value="F:protein kinase activator activity"/>
    <property type="evidence" value="ECO:0000266"/>
    <property type="project" value="RGD"/>
</dbReference>
<dbReference type="GO" id="GO:0019901">
    <property type="term" value="F:protein kinase binding"/>
    <property type="evidence" value="ECO:0000353"/>
    <property type="project" value="RGD"/>
</dbReference>
<dbReference type="GO" id="GO:0106310">
    <property type="term" value="F:protein serine kinase activity"/>
    <property type="evidence" value="ECO:0007669"/>
    <property type="project" value="RHEA"/>
</dbReference>
<dbReference type="GO" id="GO:0043539">
    <property type="term" value="F:protein serine/threonine kinase activator activity"/>
    <property type="evidence" value="ECO:0000266"/>
    <property type="project" value="RGD"/>
</dbReference>
<dbReference type="GO" id="GO:0004674">
    <property type="term" value="F:protein serine/threonine kinase activity"/>
    <property type="evidence" value="ECO:0000266"/>
    <property type="project" value="RGD"/>
</dbReference>
<dbReference type="GO" id="GO:0004712">
    <property type="term" value="F:protein serine/threonine/tyrosine kinase activity"/>
    <property type="evidence" value="ECO:0000304"/>
    <property type="project" value="UniProtKB"/>
</dbReference>
<dbReference type="GO" id="GO:0004713">
    <property type="term" value="F:protein tyrosine kinase activity"/>
    <property type="evidence" value="ECO:0007669"/>
    <property type="project" value="UniProtKB-KW"/>
</dbReference>
<dbReference type="GO" id="GO:0044877">
    <property type="term" value="F:protein-containing complex binding"/>
    <property type="evidence" value="ECO:0000353"/>
    <property type="project" value="RGD"/>
</dbReference>
<dbReference type="GO" id="GO:0097110">
    <property type="term" value="F:scaffold protein binding"/>
    <property type="evidence" value="ECO:0000266"/>
    <property type="project" value="RGD"/>
</dbReference>
<dbReference type="GO" id="GO:0031267">
    <property type="term" value="F:small GTPase binding"/>
    <property type="evidence" value="ECO:0000353"/>
    <property type="project" value="RGD"/>
</dbReference>
<dbReference type="GO" id="GO:0060020">
    <property type="term" value="P:Bergmann glial cell differentiation"/>
    <property type="evidence" value="ECO:0000266"/>
    <property type="project" value="RGD"/>
</dbReference>
<dbReference type="GO" id="GO:0048870">
    <property type="term" value="P:cell motility"/>
    <property type="evidence" value="ECO:0000266"/>
    <property type="project" value="RGD"/>
</dbReference>
<dbReference type="GO" id="GO:0090398">
    <property type="term" value="P:cellular senescence"/>
    <property type="evidence" value="ECO:0000266"/>
    <property type="project" value="RGD"/>
</dbReference>
<dbReference type="GO" id="GO:0021953">
    <property type="term" value="P:central nervous system neuron differentiation"/>
    <property type="evidence" value="ECO:0007669"/>
    <property type="project" value="Ensembl"/>
</dbReference>
<dbReference type="GO" id="GO:0021697">
    <property type="term" value="P:cerebellar cortex formation"/>
    <property type="evidence" value="ECO:0000266"/>
    <property type="project" value="RGD"/>
</dbReference>
<dbReference type="GO" id="GO:0035987">
    <property type="term" value="P:endodermal cell differentiation"/>
    <property type="evidence" value="ECO:0000266"/>
    <property type="project" value="RGD"/>
</dbReference>
<dbReference type="GO" id="GO:0060502">
    <property type="term" value="P:epithelial cell proliferation involved in lung morphogenesis"/>
    <property type="evidence" value="ECO:0000266"/>
    <property type="project" value="RGD"/>
</dbReference>
<dbReference type="GO" id="GO:0038133">
    <property type="term" value="P:ERBB2-ERBB3 signaling pathway"/>
    <property type="evidence" value="ECO:0000266"/>
    <property type="project" value="RGD"/>
</dbReference>
<dbReference type="GO" id="GO:0070371">
    <property type="term" value="P:ERK1 and ERK2 cascade"/>
    <property type="evidence" value="ECO:0000266"/>
    <property type="project" value="RGD"/>
</dbReference>
<dbReference type="GO" id="GO:0060324">
    <property type="term" value="P:face development"/>
    <property type="evidence" value="ECO:0000266"/>
    <property type="project" value="RGD"/>
</dbReference>
<dbReference type="GO" id="GO:0048313">
    <property type="term" value="P:Golgi inheritance"/>
    <property type="evidence" value="ECO:0000315"/>
    <property type="project" value="RGD"/>
</dbReference>
<dbReference type="GO" id="GO:0007507">
    <property type="term" value="P:heart development"/>
    <property type="evidence" value="ECO:0000266"/>
    <property type="project" value="RGD"/>
</dbReference>
<dbReference type="GO" id="GO:0048009">
    <property type="term" value="P:insulin-like growth factor receptor signaling pathway"/>
    <property type="evidence" value="ECO:0000266"/>
    <property type="project" value="RGD"/>
</dbReference>
<dbReference type="GO" id="GO:0035556">
    <property type="term" value="P:intracellular signal transduction"/>
    <property type="evidence" value="ECO:0000304"/>
    <property type="project" value="RGD"/>
</dbReference>
<dbReference type="GO" id="GO:0030216">
    <property type="term" value="P:keratinocyte differentiation"/>
    <property type="evidence" value="ECO:0000266"/>
    <property type="project" value="RGD"/>
</dbReference>
<dbReference type="GO" id="GO:0060711">
    <property type="term" value="P:labyrinthine layer development"/>
    <property type="evidence" value="ECO:0000266"/>
    <property type="project" value="RGD"/>
</dbReference>
<dbReference type="GO" id="GO:0060425">
    <property type="term" value="P:lung morphogenesis"/>
    <property type="evidence" value="ECO:0000266"/>
    <property type="project" value="RGD"/>
</dbReference>
<dbReference type="GO" id="GO:0000165">
    <property type="term" value="P:MAPK cascade"/>
    <property type="evidence" value="ECO:0000266"/>
    <property type="project" value="RGD"/>
</dbReference>
<dbReference type="GO" id="GO:0032402">
    <property type="term" value="P:melanosome transport"/>
    <property type="evidence" value="ECO:0000314"/>
    <property type="project" value="RGD"/>
</dbReference>
<dbReference type="GO" id="GO:0042552">
    <property type="term" value="P:myelination"/>
    <property type="evidence" value="ECO:0000266"/>
    <property type="project" value="RGD"/>
</dbReference>
<dbReference type="GO" id="GO:0008285">
    <property type="term" value="P:negative regulation of cell population proliferation"/>
    <property type="evidence" value="ECO:0000266"/>
    <property type="project" value="RGD"/>
</dbReference>
<dbReference type="GO" id="GO:0010629">
    <property type="term" value="P:negative regulation of gene expression"/>
    <property type="evidence" value="ECO:0000316"/>
    <property type="project" value="BHF-UCL"/>
</dbReference>
<dbReference type="GO" id="GO:0034111">
    <property type="term" value="P:negative regulation of homotypic cell-cell adhesion"/>
    <property type="evidence" value="ECO:0000315"/>
    <property type="project" value="RGD"/>
</dbReference>
<dbReference type="GO" id="GO:1903298">
    <property type="term" value="P:negative regulation of hypoxia-induced intrinsic apoptotic signaling pathway"/>
    <property type="evidence" value="ECO:0000315"/>
    <property type="project" value="CAFA"/>
</dbReference>
<dbReference type="GO" id="GO:0030182">
    <property type="term" value="P:neuron differentiation"/>
    <property type="evidence" value="ECO:0000315"/>
    <property type="project" value="RGD"/>
</dbReference>
<dbReference type="GO" id="GO:0048812">
    <property type="term" value="P:neuron projection morphogenesis"/>
    <property type="evidence" value="ECO:0000315"/>
    <property type="project" value="RGD"/>
</dbReference>
<dbReference type="GO" id="GO:0060674">
    <property type="term" value="P:placenta blood vessel development"/>
    <property type="evidence" value="ECO:0000266"/>
    <property type="project" value="RGD"/>
</dbReference>
<dbReference type="GO" id="GO:2001171">
    <property type="term" value="P:positive regulation of ATP biosynthetic process"/>
    <property type="evidence" value="ECO:0000315"/>
    <property type="project" value="CAFA"/>
</dbReference>
<dbReference type="GO" id="GO:0010508">
    <property type="term" value="P:positive regulation of autophagy"/>
    <property type="evidence" value="ECO:0000314"/>
    <property type="project" value="RGD"/>
</dbReference>
<dbReference type="GO" id="GO:0050772">
    <property type="term" value="P:positive regulation of axonogenesis"/>
    <property type="evidence" value="ECO:0000266"/>
    <property type="project" value="RGD"/>
</dbReference>
<dbReference type="GO" id="GO:0030335">
    <property type="term" value="P:positive regulation of cell migration"/>
    <property type="evidence" value="ECO:0000315"/>
    <property type="project" value="RGD"/>
</dbReference>
<dbReference type="GO" id="GO:0045893">
    <property type="term" value="P:positive regulation of DNA-templated transcription"/>
    <property type="evidence" value="ECO:0000266"/>
    <property type="project" value="RGD"/>
</dbReference>
<dbReference type="GO" id="GO:1903226">
    <property type="term" value="P:positive regulation of endodermal cell differentiation"/>
    <property type="evidence" value="ECO:0000266"/>
    <property type="project" value="RGD"/>
</dbReference>
<dbReference type="GO" id="GO:0070374">
    <property type="term" value="P:positive regulation of ERK1 and ERK2 cascade"/>
    <property type="evidence" value="ECO:0000266"/>
    <property type="project" value="RGD"/>
</dbReference>
<dbReference type="GO" id="GO:0010628">
    <property type="term" value="P:positive regulation of gene expression"/>
    <property type="evidence" value="ECO:0000315"/>
    <property type="project" value="CAFA"/>
</dbReference>
<dbReference type="GO" id="GO:0043410">
    <property type="term" value="P:positive regulation of MAPK cascade"/>
    <property type="evidence" value="ECO:0000314"/>
    <property type="project" value="RGD"/>
</dbReference>
<dbReference type="GO" id="GO:0045933">
    <property type="term" value="P:positive regulation of muscle contraction"/>
    <property type="evidence" value="ECO:0000315"/>
    <property type="project" value="CAFA"/>
</dbReference>
<dbReference type="GO" id="GO:0046579">
    <property type="term" value="P:positive regulation of Ras protein signal transduction"/>
    <property type="evidence" value="ECO:0000315"/>
    <property type="project" value="MGI"/>
</dbReference>
<dbReference type="GO" id="GO:0032968">
    <property type="term" value="P:positive regulation of transcription elongation by RNA polymerase II"/>
    <property type="evidence" value="ECO:0000315"/>
    <property type="project" value="RGD"/>
</dbReference>
<dbReference type="GO" id="GO:0048679">
    <property type="term" value="P:regulation of axon regeneration"/>
    <property type="evidence" value="ECO:0000266"/>
    <property type="project" value="RGD"/>
</dbReference>
<dbReference type="GO" id="GO:2000641">
    <property type="term" value="P:regulation of early endosome to late endosome transport"/>
    <property type="evidence" value="ECO:0000304"/>
    <property type="project" value="UniProtKB"/>
</dbReference>
<dbReference type="GO" id="GO:0070372">
    <property type="term" value="P:regulation of ERK1 and ERK2 cascade"/>
    <property type="evidence" value="ECO:0000314"/>
    <property type="project" value="RGD"/>
</dbReference>
<dbReference type="GO" id="GO:0090170">
    <property type="term" value="P:regulation of Golgi inheritance"/>
    <property type="evidence" value="ECO:0000304"/>
    <property type="project" value="UniProtKB"/>
</dbReference>
<dbReference type="GO" id="GO:0098696">
    <property type="term" value="P:regulation of neurotransmitter receptor localization to postsynaptic specialization membrane"/>
    <property type="evidence" value="ECO:0000314"/>
    <property type="project" value="SynGO"/>
</dbReference>
<dbReference type="GO" id="GO:0032872">
    <property type="term" value="P:regulation of stress-activated MAPK cascade"/>
    <property type="evidence" value="ECO:0000304"/>
    <property type="project" value="UniProtKB"/>
</dbReference>
<dbReference type="GO" id="GO:0003056">
    <property type="term" value="P:regulation of vascular associated smooth muscle contraction"/>
    <property type="evidence" value="ECO:0000315"/>
    <property type="project" value="RGD"/>
</dbReference>
<dbReference type="GO" id="GO:0048678">
    <property type="term" value="P:response to axon injury"/>
    <property type="evidence" value="ECO:0000315"/>
    <property type="project" value="RGD"/>
</dbReference>
<dbReference type="GO" id="GO:0051384">
    <property type="term" value="P:response to glucocorticoid"/>
    <property type="evidence" value="ECO:0000314"/>
    <property type="project" value="RGD"/>
</dbReference>
<dbReference type="GO" id="GO:0006979">
    <property type="term" value="P:response to oxidative stress"/>
    <property type="evidence" value="ECO:0000314"/>
    <property type="project" value="RGD"/>
</dbReference>
<dbReference type="GO" id="GO:0014044">
    <property type="term" value="P:Schwann cell development"/>
    <property type="evidence" value="ECO:0000266"/>
    <property type="project" value="RGD"/>
</dbReference>
<dbReference type="GO" id="GO:0048538">
    <property type="term" value="P:thymus development"/>
    <property type="evidence" value="ECO:0000266"/>
    <property type="project" value="RGD"/>
</dbReference>
<dbReference type="GO" id="GO:0030878">
    <property type="term" value="P:thyroid gland development"/>
    <property type="evidence" value="ECO:0000266"/>
    <property type="project" value="RGD"/>
</dbReference>
<dbReference type="GO" id="GO:0060440">
    <property type="term" value="P:trachea formation"/>
    <property type="evidence" value="ECO:0000266"/>
    <property type="project" value="RGD"/>
</dbReference>
<dbReference type="GO" id="GO:0070328">
    <property type="term" value="P:triglyceride homeostasis"/>
    <property type="evidence" value="ECO:0000314"/>
    <property type="project" value="RGD"/>
</dbReference>
<dbReference type="GO" id="GO:0044342">
    <property type="term" value="P:type B pancreatic cell proliferation"/>
    <property type="evidence" value="ECO:0000266"/>
    <property type="project" value="RGD"/>
</dbReference>
<dbReference type="GO" id="GO:0047496">
    <property type="term" value="P:vesicle transport along microtubule"/>
    <property type="evidence" value="ECO:0000314"/>
    <property type="project" value="RGD"/>
</dbReference>
<dbReference type="CDD" id="cd06650">
    <property type="entry name" value="PKc_MEK1"/>
    <property type="match status" value="1"/>
</dbReference>
<dbReference type="FunFam" id="1.10.510.10:FF:000115">
    <property type="entry name" value="Dual specificity mitogen-activated protein kinase kinase 1"/>
    <property type="match status" value="1"/>
</dbReference>
<dbReference type="FunFam" id="3.30.200.20:FF:000100">
    <property type="entry name" value="Dual specificity mitogen-activated protein kinase kinase 1"/>
    <property type="match status" value="1"/>
</dbReference>
<dbReference type="Gene3D" id="3.30.200.20">
    <property type="entry name" value="Phosphorylase Kinase, domain 1"/>
    <property type="match status" value="1"/>
</dbReference>
<dbReference type="Gene3D" id="1.10.510.10">
    <property type="entry name" value="Transferase(Phosphotransferase) domain 1"/>
    <property type="match status" value="1"/>
</dbReference>
<dbReference type="InterPro" id="IPR011009">
    <property type="entry name" value="Kinase-like_dom_sf"/>
</dbReference>
<dbReference type="InterPro" id="IPR050915">
    <property type="entry name" value="MAP_kinase_kinase"/>
</dbReference>
<dbReference type="InterPro" id="IPR000719">
    <property type="entry name" value="Prot_kinase_dom"/>
</dbReference>
<dbReference type="InterPro" id="IPR017441">
    <property type="entry name" value="Protein_kinase_ATP_BS"/>
</dbReference>
<dbReference type="InterPro" id="IPR008271">
    <property type="entry name" value="Ser/Thr_kinase_AS"/>
</dbReference>
<dbReference type="PANTHER" id="PTHR47448">
    <property type="entry name" value="DUAL SPECIFICITY MITOGEN-ACTIVATED PROTEIN KINASE KINASE DSOR1-LIKE PROTEIN"/>
    <property type="match status" value="1"/>
</dbReference>
<dbReference type="PANTHER" id="PTHR47448:SF2">
    <property type="entry name" value="MITOGEN-ACTIVATED PROTEIN KINASE KINASE 1"/>
    <property type="match status" value="1"/>
</dbReference>
<dbReference type="Pfam" id="PF00069">
    <property type="entry name" value="Pkinase"/>
    <property type="match status" value="1"/>
</dbReference>
<dbReference type="SMART" id="SM00220">
    <property type="entry name" value="S_TKc"/>
    <property type="match status" value="1"/>
</dbReference>
<dbReference type="SUPFAM" id="SSF56112">
    <property type="entry name" value="Protein kinase-like (PK-like)"/>
    <property type="match status" value="1"/>
</dbReference>
<dbReference type="PROSITE" id="PS00107">
    <property type="entry name" value="PROTEIN_KINASE_ATP"/>
    <property type="match status" value="1"/>
</dbReference>
<dbReference type="PROSITE" id="PS50011">
    <property type="entry name" value="PROTEIN_KINASE_DOM"/>
    <property type="match status" value="1"/>
</dbReference>
<dbReference type="PROSITE" id="PS00108">
    <property type="entry name" value="PROTEIN_KINASE_ST"/>
    <property type="match status" value="1"/>
</dbReference>